<evidence type="ECO:0000255" key="1">
    <source>
        <dbReference type="PROSITE-ProRule" id="PRU00160"/>
    </source>
</evidence>
<evidence type="ECO:0000305" key="2"/>
<proteinExistence type="inferred from homology"/>
<dbReference type="EMBL" id="AY875685">
    <property type="protein sequence ID" value="AAW51788.1"/>
    <property type="molecule type" value="Genomic_DNA"/>
</dbReference>
<dbReference type="RefSeq" id="YP_239386.1">
    <property type="nucleotide sequence ID" value="NC_007035.1"/>
</dbReference>
<dbReference type="SMR" id="Q5I142"/>
<dbReference type="KEGG" id="vg:5075821"/>
<dbReference type="Proteomes" id="UP000008168">
    <property type="component" value="Genome"/>
</dbReference>
<dbReference type="GO" id="GO:0004725">
    <property type="term" value="F:protein tyrosine phosphatase activity"/>
    <property type="evidence" value="ECO:0007669"/>
    <property type="project" value="InterPro"/>
</dbReference>
<dbReference type="Gene3D" id="3.90.190.10">
    <property type="entry name" value="Protein tyrosine phosphatase superfamily"/>
    <property type="match status" value="1"/>
</dbReference>
<dbReference type="InterPro" id="IPR029021">
    <property type="entry name" value="Prot-tyrosine_phosphatase-like"/>
</dbReference>
<dbReference type="InterPro" id="IPR050348">
    <property type="entry name" value="Protein-Tyr_Phosphatase"/>
</dbReference>
<dbReference type="InterPro" id="IPR000242">
    <property type="entry name" value="PTP_cat"/>
</dbReference>
<dbReference type="PANTHER" id="PTHR19134:SF534">
    <property type="entry name" value="LD27988P"/>
    <property type="match status" value="1"/>
</dbReference>
<dbReference type="PANTHER" id="PTHR19134">
    <property type="entry name" value="RECEPTOR-TYPE TYROSINE-PROTEIN PHOSPHATASE"/>
    <property type="match status" value="1"/>
</dbReference>
<dbReference type="Pfam" id="PF00102">
    <property type="entry name" value="Y_phosphatase"/>
    <property type="match status" value="1"/>
</dbReference>
<dbReference type="PRINTS" id="PR00700">
    <property type="entry name" value="PRTYPHPHTASE"/>
</dbReference>
<dbReference type="SMART" id="SM00194">
    <property type="entry name" value="PTPc"/>
    <property type="match status" value="1"/>
</dbReference>
<dbReference type="SUPFAM" id="SSF52799">
    <property type="entry name" value="(Phosphotyrosine protein) phosphatases II"/>
    <property type="match status" value="1"/>
</dbReference>
<dbReference type="PROSITE" id="PS50055">
    <property type="entry name" value="TYR_PHOSPHATASE_PTP"/>
    <property type="match status" value="1"/>
</dbReference>
<keyword id="KW-1185">Reference proteome</keyword>
<name>PTPH5_MDBVW</name>
<organism>
    <name type="scientific">Microplitis demolitor bracovirus (isolate Webb)</name>
    <name type="common">MdBV</name>
    <dbReference type="NCBI Taxonomy" id="654919"/>
    <lineage>
        <taxon>Viruses</taxon>
        <taxon>Viruses incertae sedis</taxon>
        <taxon>Polydnaviriformidae</taxon>
        <taxon>Bracoviriform</taxon>
        <taxon>Microplitis demolitor bracovirus</taxon>
    </lineage>
</organism>
<sequence>MGNQSFKTLSIDDFLQITGWPDFSKLIKKEHDKVLAVQLPGTFVNFSKPQNSLKNRYNEIPCWDHSRVILIPPSAKYNYDHTDPSHITLTPTEIPSTYIHANFVNGFKEKRKFICCQTPKKNTCEHFWRMVLEQESHIIVSLTKTDKGGFVCHEYWLNAEEGMEIFGRYVIRTLEIIKESSFTKTRLRLTDVCTDASREIHHFWYTDWPDVGNPISPVQILDLILQMNKKRKELTQAAGFKLGPIVVPAPKESVEQEYFVP</sequence>
<feature type="chain" id="PRO_0000405372" description="Tyrosine phosphatase-like protein H5">
    <location>
        <begin position="1"/>
        <end position="261"/>
    </location>
</feature>
<feature type="domain" description="Tyrosine-protein phosphatase" evidence="1">
    <location>
        <begin position="26"/>
        <end position="261"/>
    </location>
</feature>
<accession>Q5I142</accession>
<protein>
    <recommendedName>
        <fullName>Tyrosine phosphatase-like protein H5</fullName>
        <shortName>PTP-H5</shortName>
    </recommendedName>
</protein>
<comment type="similarity">
    <text evidence="2">Belongs to the protein-tyrosine phosphatase family.</text>
</comment>
<comment type="caution">
    <text evidence="2">PTP-H5 does not appear to be a functional PTP.</text>
</comment>
<organismHost>
    <name type="scientific">Microplitis demolitor</name>
    <name type="common">Parasitoid wasp</name>
    <dbReference type="NCBI Taxonomy" id="69319"/>
</organismHost>
<reference key="1">
    <citation type="journal article" date="2006" name="Virology">
        <title>Polydnavirus genomes reflect their dual roles as mutualists and pathogens.</title>
        <authorList>
            <person name="Webb B.A."/>
            <person name="Strand M.R."/>
            <person name="Dickey S.E."/>
            <person name="Beck M.H."/>
            <person name="Hilgarth R.S."/>
            <person name="Barney W.E."/>
            <person name="Kadash K."/>
            <person name="Kroemer J.A."/>
            <person name="Lindstrom K.G."/>
            <person name="Rattanadechakul W."/>
            <person name="Shelby K.S."/>
            <person name="Thoetkiattikul H."/>
            <person name="Turnbull M.W."/>
            <person name="Witherell R.A."/>
        </authorList>
    </citation>
    <scope>NUCLEOTIDE SEQUENCE [GENOMIC DNA]</scope>
</reference>
<gene>
    <name type="primary">H6</name>
</gene>